<accession>Q84VX0</accession>
<accession>Q9LFZ7</accession>
<reference key="1">
    <citation type="journal article" date="2000" name="Nature">
        <title>Sequence and analysis of chromosome 1 of the plant Arabidopsis thaliana.</title>
        <authorList>
            <person name="Theologis A."/>
            <person name="Ecker J.R."/>
            <person name="Palm C.J."/>
            <person name="Federspiel N.A."/>
            <person name="Kaul S."/>
            <person name="White O."/>
            <person name="Alonso J."/>
            <person name="Altafi H."/>
            <person name="Araujo R."/>
            <person name="Bowman C.L."/>
            <person name="Brooks S.Y."/>
            <person name="Buehler E."/>
            <person name="Chan A."/>
            <person name="Chao Q."/>
            <person name="Chen H."/>
            <person name="Cheuk R.F."/>
            <person name="Chin C.W."/>
            <person name="Chung M.K."/>
            <person name="Conn L."/>
            <person name="Conway A.B."/>
            <person name="Conway A.R."/>
            <person name="Creasy T.H."/>
            <person name="Dewar K."/>
            <person name="Dunn P."/>
            <person name="Etgu P."/>
            <person name="Feldblyum T.V."/>
            <person name="Feng J.-D."/>
            <person name="Fong B."/>
            <person name="Fujii C.Y."/>
            <person name="Gill J.E."/>
            <person name="Goldsmith A.D."/>
            <person name="Haas B."/>
            <person name="Hansen N.F."/>
            <person name="Hughes B."/>
            <person name="Huizar L."/>
            <person name="Hunter J.L."/>
            <person name="Jenkins J."/>
            <person name="Johnson-Hopson C."/>
            <person name="Khan S."/>
            <person name="Khaykin E."/>
            <person name="Kim C.J."/>
            <person name="Koo H.L."/>
            <person name="Kremenetskaia I."/>
            <person name="Kurtz D.B."/>
            <person name="Kwan A."/>
            <person name="Lam B."/>
            <person name="Langin-Hooper S."/>
            <person name="Lee A."/>
            <person name="Lee J.M."/>
            <person name="Lenz C.A."/>
            <person name="Li J.H."/>
            <person name="Li Y.-P."/>
            <person name="Lin X."/>
            <person name="Liu S.X."/>
            <person name="Liu Z.A."/>
            <person name="Luros J.S."/>
            <person name="Maiti R."/>
            <person name="Marziali A."/>
            <person name="Militscher J."/>
            <person name="Miranda M."/>
            <person name="Nguyen M."/>
            <person name="Nierman W.C."/>
            <person name="Osborne B.I."/>
            <person name="Pai G."/>
            <person name="Peterson J."/>
            <person name="Pham P.K."/>
            <person name="Rizzo M."/>
            <person name="Rooney T."/>
            <person name="Rowley D."/>
            <person name="Sakano H."/>
            <person name="Salzberg S.L."/>
            <person name="Schwartz J.R."/>
            <person name="Shinn P."/>
            <person name="Southwick A.M."/>
            <person name="Sun H."/>
            <person name="Tallon L.J."/>
            <person name="Tambunga G."/>
            <person name="Toriumi M.J."/>
            <person name="Town C.D."/>
            <person name="Utterback T."/>
            <person name="Van Aken S."/>
            <person name="Vaysberg M."/>
            <person name="Vysotskaia V.S."/>
            <person name="Walker M."/>
            <person name="Wu D."/>
            <person name="Yu G."/>
            <person name="Fraser C.M."/>
            <person name="Venter J.C."/>
            <person name="Davis R.W."/>
        </authorList>
    </citation>
    <scope>NUCLEOTIDE SEQUENCE [LARGE SCALE GENOMIC DNA]</scope>
    <source>
        <strain>cv. Columbia</strain>
    </source>
</reference>
<reference key="2">
    <citation type="journal article" date="2017" name="Plant J.">
        <title>Araport11: a complete reannotation of the Arabidopsis thaliana reference genome.</title>
        <authorList>
            <person name="Cheng C.Y."/>
            <person name="Krishnakumar V."/>
            <person name="Chan A.P."/>
            <person name="Thibaud-Nissen F."/>
            <person name="Schobel S."/>
            <person name="Town C.D."/>
        </authorList>
    </citation>
    <scope>GENOME REANNOTATION</scope>
    <source>
        <strain>cv. Columbia</strain>
    </source>
</reference>
<reference key="3">
    <citation type="journal article" date="2003" name="Science">
        <title>Empirical analysis of transcriptional activity in the Arabidopsis genome.</title>
        <authorList>
            <person name="Yamada K."/>
            <person name="Lim J."/>
            <person name="Dale J.M."/>
            <person name="Chen H."/>
            <person name="Shinn P."/>
            <person name="Palm C.J."/>
            <person name="Southwick A.M."/>
            <person name="Wu H.C."/>
            <person name="Kim C.J."/>
            <person name="Nguyen M."/>
            <person name="Pham P.K."/>
            <person name="Cheuk R.F."/>
            <person name="Karlin-Newmann G."/>
            <person name="Liu S.X."/>
            <person name="Lam B."/>
            <person name="Sakano H."/>
            <person name="Wu T."/>
            <person name="Yu G."/>
            <person name="Miranda M."/>
            <person name="Quach H.L."/>
            <person name="Tripp M."/>
            <person name="Chang C.H."/>
            <person name="Lee J.M."/>
            <person name="Toriumi M.J."/>
            <person name="Chan M.M."/>
            <person name="Tang C.C."/>
            <person name="Onodera C.S."/>
            <person name="Deng J.M."/>
            <person name="Akiyama K."/>
            <person name="Ansari Y."/>
            <person name="Arakawa T."/>
            <person name="Banh J."/>
            <person name="Banno F."/>
            <person name="Bowser L."/>
            <person name="Brooks S.Y."/>
            <person name="Carninci P."/>
            <person name="Chao Q."/>
            <person name="Choy N."/>
            <person name="Enju A."/>
            <person name="Goldsmith A.D."/>
            <person name="Gurjal M."/>
            <person name="Hansen N.F."/>
            <person name="Hayashizaki Y."/>
            <person name="Johnson-Hopson C."/>
            <person name="Hsuan V.W."/>
            <person name="Iida K."/>
            <person name="Karnes M."/>
            <person name="Khan S."/>
            <person name="Koesema E."/>
            <person name="Ishida J."/>
            <person name="Jiang P.X."/>
            <person name="Jones T."/>
            <person name="Kawai J."/>
            <person name="Kamiya A."/>
            <person name="Meyers C."/>
            <person name="Nakajima M."/>
            <person name="Narusaka M."/>
            <person name="Seki M."/>
            <person name="Sakurai T."/>
            <person name="Satou M."/>
            <person name="Tamse R."/>
            <person name="Vaysberg M."/>
            <person name="Wallender E.K."/>
            <person name="Wong C."/>
            <person name="Yamamura Y."/>
            <person name="Yuan S."/>
            <person name="Shinozaki K."/>
            <person name="Davis R.W."/>
            <person name="Theologis A."/>
            <person name="Ecker J.R."/>
        </authorList>
    </citation>
    <scope>NUCLEOTIDE SEQUENCE [LARGE SCALE MRNA]</scope>
    <source>
        <strain>cv. Columbia</strain>
    </source>
</reference>
<reference key="4">
    <citation type="submission" date="2006-07" db="EMBL/GenBank/DDBJ databases">
        <title>Large-scale analysis of RIKEN Arabidopsis full-length (RAFL) cDNAs.</title>
        <authorList>
            <person name="Totoki Y."/>
            <person name="Seki M."/>
            <person name="Ishida J."/>
            <person name="Nakajima M."/>
            <person name="Enju A."/>
            <person name="Kamiya A."/>
            <person name="Narusaka M."/>
            <person name="Shin-i T."/>
            <person name="Nakagawa M."/>
            <person name="Sakamoto N."/>
            <person name="Oishi K."/>
            <person name="Kohara Y."/>
            <person name="Kobayashi M."/>
            <person name="Toyoda A."/>
            <person name="Sakaki Y."/>
            <person name="Sakurai T."/>
            <person name="Iida K."/>
            <person name="Akiyama K."/>
            <person name="Satou M."/>
            <person name="Toyoda T."/>
            <person name="Konagaya A."/>
            <person name="Carninci P."/>
            <person name="Kawai J."/>
            <person name="Hayashizaki Y."/>
            <person name="Shinozaki K."/>
        </authorList>
    </citation>
    <scope>NUCLEOTIDE SEQUENCE [LARGE SCALE MRNA]</scope>
    <source>
        <strain>cv. Columbia</strain>
    </source>
</reference>
<reference key="5">
    <citation type="journal article" date="2008" name="Plant Physiol.">
        <title>Galactinol and raffinose constitute a novel function to protect plants from oxidative damage.</title>
        <authorList>
            <person name="Nishizawa A."/>
            <person name="Yabuta Y."/>
            <person name="Shigeoka S."/>
        </authorList>
    </citation>
    <scope>INDUCTION BY OXIDATIVE STRESS</scope>
    <scope>GENE FAMILY</scope>
    <scope>NOMENCLATURE</scope>
</reference>
<keyword id="KW-0119">Carbohydrate metabolism</keyword>
<keyword id="KW-0328">Glycosyltransferase</keyword>
<keyword id="KW-1185">Reference proteome</keyword>
<keyword id="KW-0808">Transferase</keyword>
<protein>
    <recommendedName>
        <fullName>Probable galactinol--sucrose galactosyltransferase 1</fullName>
        <ecNumber>2.4.1.82</ecNumber>
    </recommendedName>
    <alternativeName>
        <fullName>Protein SEED IMBIBITION 1</fullName>
    </alternativeName>
    <alternativeName>
        <fullName>Raffinose synthase 1</fullName>
    </alternativeName>
</protein>
<dbReference type="EC" id="2.4.1.82"/>
<dbReference type="EMBL" id="AC002328">
    <property type="protein sequence ID" value="AAF79504.1"/>
    <property type="status" value="ALT_SEQ"/>
    <property type="molecule type" value="Genomic_DNA"/>
</dbReference>
<dbReference type="EMBL" id="CP002684">
    <property type="protein sequence ID" value="AEE33292.1"/>
    <property type="molecule type" value="Genomic_DNA"/>
</dbReference>
<dbReference type="EMBL" id="BT004640">
    <property type="protein sequence ID" value="AAO42886.1"/>
    <property type="molecule type" value="mRNA"/>
</dbReference>
<dbReference type="EMBL" id="AK227977">
    <property type="protein sequence ID" value="BAE99943.1"/>
    <property type="molecule type" value="mRNA"/>
</dbReference>
<dbReference type="PIR" id="C96599">
    <property type="entry name" value="C96599"/>
</dbReference>
<dbReference type="RefSeq" id="NP_175970.1">
    <property type="nucleotide sequence ID" value="NM_104450.4"/>
</dbReference>
<dbReference type="SMR" id="Q84VX0"/>
<dbReference type="BioGRID" id="27248">
    <property type="interactions" value="1"/>
</dbReference>
<dbReference type="FunCoup" id="Q84VX0">
    <property type="interactions" value="56"/>
</dbReference>
<dbReference type="IntAct" id="Q84VX0">
    <property type="interactions" value="1"/>
</dbReference>
<dbReference type="STRING" id="3702.Q84VX0"/>
<dbReference type="CAZy" id="GH36">
    <property type="family name" value="Glycoside Hydrolase Family 36"/>
</dbReference>
<dbReference type="PaxDb" id="3702-AT1G55740.1"/>
<dbReference type="ProteomicsDB" id="236923"/>
<dbReference type="EnsemblPlants" id="AT1G55740.1">
    <property type="protein sequence ID" value="AT1G55740.1"/>
    <property type="gene ID" value="AT1G55740"/>
</dbReference>
<dbReference type="GeneID" id="842023"/>
<dbReference type="Gramene" id="AT1G55740.1">
    <property type="protein sequence ID" value="AT1G55740.1"/>
    <property type="gene ID" value="AT1G55740"/>
</dbReference>
<dbReference type="KEGG" id="ath:AT1G55740"/>
<dbReference type="Araport" id="AT1G55740"/>
<dbReference type="TAIR" id="AT1G55740">
    <property type="gene designation" value="SIP1"/>
</dbReference>
<dbReference type="eggNOG" id="ENOG502QPVE">
    <property type="taxonomic scope" value="Eukaryota"/>
</dbReference>
<dbReference type="HOGENOM" id="CLU_007066_0_0_1"/>
<dbReference type="InParanoid" id="Q84VX0"/>
<dbReference type="OMA" id="KTNLIHD"/>
<dbReference type="PhylomeDB" id="Q84VX0"/>
<dbReference type="BioCyc" id="ARA:AT1G55740-MONOMER"/>
<dbReference type="BRENDA" id="2.4.1.82">
    <property type="organism ID" value="399"/>
</dbReference>
<dbReference type="PRO" id="PR:Q84VX0"/>
<dbReference type="Proteomes" id="UP000006548">
    <property type="component" value="Chromosome 1"/>
</dbReference>
<dbReference type="ExpressionAtlas" id="Q84VX0">
    <property type="expression patterns" value="baseline and differential"/>
</dbReference>
<dbReference type="GO" id="GO:0047274">
    <property type="term" value="F:galactinol-sucrose galactosyltransferase activity"/>
    <property type="evidence" value="ECO:0007669"/>
    <property type="project" value="UniProtKB-EC"/>
</dbReference>
<dbReference type="FunFam" id="3.20.20.70:FF:000129">
    <property type="entry name" value="Probable galactinol--sucrose galactosyltransferase 1"/>
    <property type="match status" value="1"/>
</dbReference>
<dbReference type="Gene3D" id="3.20.20.70">
    <property type="entry name" value="Aldolase class I"/>
    <property type="match status" value="1"/>
</dbReference>
<dbReference type="InterPro" id="IPR013785">
    <property type="entry name" value="Aldolase_TIM"/>
</dbReference>
<dbReference type="InterPro" id="IPR017853">
    <property type="entry name" value="Glycoside_hydrolase_SF"/>
</dbReference>
<dbReference type="InterPro" id="IPR008811">
    <property type="entry name" value="Glycosyl_hydrolases_36"/>
</dbReference>
<dbReference type="PANTHER" id="PTHR31268">
    <property type="match status" value="1"/>
</dbReference>
<dbReference type="PANTHER" id="PTHR31268:SF29">
    <property type="entry name" value="GALACTINOL--SUCROSE GALACTOSYLTRANSFERASE 1-RELATED"/>
    <property type="match status" value="1"/>
</dbReference>
<dbReference type="Pfam" id="PF05691">
    <property type="entry name" value="Raffinose_syn"/>
    <property type="match status" value="1"/>
</dbReference>
<dbReference type="SUPFAM" id="SSF51445">
    <property type="entry name" value="(Trans)glycosidases"/>
    <property type="match status" value="1"/>
</dbReference>
<sequence>MTVGAGISVTDSDLVVLGHRVLHGVPENVLVTPASGNALIDGAFIGVTSDQTGSHRVFSLGKLEDLRFMCVFRFKLWWMTQRMGTNGKEIPCETQFLIVEANQGSDLGGRDQSSSYVVFLPILEGDFRAVLQGNEANELEICLESGDPTVDQFEGSHLVFVAAGSDPFDVITKAVKAVEQHLQTFSHRERKKMPDMLNWFGWCTWDAFYTNVTAKDVKQGLESLKAGGVTPKFVIIDDGWQSVGMDETSVEFNADNAANFANRLTHIKENHKFQKDGKEGHRVDDPSLSLGHVITDIKSNNSLKYVYVWHAITGYWGGVKPGVSGMEHYESKVAYPVSSPGVMSSENCGCLESITKNGLGLVNPEKVFSFYNDLHSYLASVGVDGVKVDVQNILETLGAGHGGRVKLAKKYHQALEASISRNFPDNGIISCMSHNTDGLYSAKKTAVIRASDDFWPRDPASHTIHIASVAYNTLFLGEFMQPDWDMFHSLHPMAEYHAAARAVGGCAIYVSDKPGQHDFNLLRKLVLRDGSILRAKLPGRPTSDCFFSDPVRDNKSLLKIWNLNEFTGVIGVFNCQGAGWCKNEKRYLIHDQEPGTISGCVRTNDVHYLHKVAAFEWTGDSIVYSHLRGELVYLPKDTSLPVTLMPREYEVFTVVPVKEFSDGSKFAPVGLMEMFNSGGAIVSLRYDDEGTKFVVRMKLRGSGLVGVYSSVRRPRSVTVDSDDVEYRYEPESGLVTFTLGVPEKELYLWDVVIQ</sequence>
<evidence type="ECO:0000250" key="1"/>
<evidence type="ECO:0000269" key="2">
    <source>
    </source>
</evidence>
<evidence type="ECO:0000305" key="3"/>
<feature type="chain" id="PRO_0000270157" description="Probable galactinol--sucrose galactosyltransferase 1">
    <location>
        <begin position="1"/>
        <end position="754"/>
    </location>
</feature>
<organism>
    <name type="scientific">Arabidopsis thaliana</name>
    <name type="common">Mouse-ear cress</name>
    <dbReference type="NCBI Taxonomy" id="3702"/>
    <lineage>
        <taxon>Eukaryota</taxon>
        <taxon>Viridiplantae</taxon>
        <taxon>Streptophyta</taxon>
        <taxon>Embryophyta</taxon>
        <taxon>Tracheophyta</taxon>
        <taxon>Spermatophyta</taxon>
        <taxon>Magnoliopsida</taxon>
        <taxon>eudicotyledons</taxon>
        <taxon>Gunneridae</taxon>
        <taxon>Pentapetalae</taxon>
        <taxon>rosids</taxon>
        <taxon>malvids</taxon>
        <taxon>Brassicales</taxon>
        <taxon>Brassicaceae</taxon>
        <taxon>Camelineae</taxon>
        <taxon>Arabidopsis</taxon>
    </lineage>
</organism>
<comment type="function">
    <text evidence="1">Transglycosidase operating by a ping-pong reaction mechanism. Involved in the synthesis of raffinose, a major soluble carbohydrate in seeds, roots and tubers (By similarity).</text>
</comment>
<comment type="catalytic activity">
    <reaction>
        <text>alpha-D-galactosyl-(1-&gt;3)-1D-myo-inositol + sucrose = raffinose + myo-inositol</text>
        <dbReference type="Rhea" id="RHEA:20161"/>
        <dbReference type="ChEBI" id="CHEBI:16634"/>
        <dbReference type="ChEBI" id="CHEBI:17268"/>
        <dbReference type="ChEBI" id="CHEBI:17505"/>
        <dbReference type="ChEBI" id="CHEBI:17992"/>
        <dbReference type="EC" id="2.4.1.82"/>
    </reaction>
</comment>
<comment type="induction">
    <text evidence="2">Not induced by oxidative stress.</text>
</comment>
<comment type="similarity">
    <text evidence="3">Belongs to the glycosyl hydrolases 36 family.</text>
</comment>
<comment type="sequence caution" evidence="3">
    <conflict type="erroneous gene model prediction">
        <sequence resource="EMBL-CDS" id="AAF79504"/>
    </conflict>
    <text>The predicted gene has been split into 2 genes: At1g55730 and At1g55740.</text>
</comment>
<gene>
    <name type="primary">RFS1</name>
    <name type="synonym">RS1</name>
    <name type="synonym">SIP1</name>
    <name type="ordered locus">At1g55740</name>
    <name type="ORF">F20N2.12</name>
    <name type="ORF">F20N2.14</name>
</gene>
<proteinExistence type="evidence at transcript level"/>
<name>RFS1_ARATH</name>